<sequence length="304" mass="34658">MVAPSQFKQLEKVGNGTYATVYKGLNKTTGVYVALKEVKLDSEEGTPSTAIREISLMKELKHDNIVRLFDVIHTENKLTLVFEFMDNDLKKFMDNRNKGNSHKGLEMDLVKYFQWQLLQGVAFCHENRILHRDLKPQNLLINNRGQLKLGDFGLARAFGIPVNTFSSEVVTLWYRAPDVLMGSRNYCTSIDIWSCGCILAEMIMGKPLFPGSNDEEQLKLIFDTMGTPVEQTWPQVTQLAKYNPLLPPHMPRDLKQLLQNNTEEVLDDNVVDLLHGLLQLNPDARLSAKDALNHPWFAEYNHAN</sequence>
<keyword id="KW-0067">ATP-binding</keyword>
<keyword id="KW-0418">Kinase</keyword>
<keyword id="KW-0547">Nucleotide-binding</keyword>
<keyword id="KW-1185">Reference proteome</keyword>
<keyword id="KW-0723">Serine/threonine-protein kinase</keyword>
<keyword id="KW-0808">Transferase</keyword>
<feature type="chain" id="PRO_0000086519" description="Negative regulator of the PHO system">
    <location>
        <begin position="1"/>
        <end position="304"/>
    </location>
</feature>
<feature type="domain" description="Protein kinase" evidence="2">
    <location>
        <begin position="7"/>
        <end position="297"/>
    </location>
</feature>
<feature type="active site" description="Proton acceptor" evidence="2 3">
    <location>
        <position position="133"/>
    </location>
</feature>
<feature type="binding site" evidence="2">
    <location>
        <begin position="13"/>
        <end position="21"/>
    </location>
    <ligand>
        <name>ATP</name>
        <dbReference type="ChEBI" id="CHEBI:30616"/>
    </ligand>
</feature>
<feature type="binding site" evidence="2">
    <location>
        <position position="36"/>
    </location>
    <ligand>
        <name>ATP</name>
        <dbReference type="ChEBI" id="CHEBI:30616"/>
    </ligand>
</feature>
<feature type="sequence conflict" description="In Ref. 1; CAA64698." evidence="4" ref="1">
    <original>S</original>
    <variation>P</variation>
    <location>
        <position position="101"/>
    </location>
</feature>
<feature type="sequence conflict" description="In Ref. 1; CAA64698." evidence="4" ref="1">
    <original>S</original>
    <variation>L</variation>
    <location>
        <position position="189"/>
    </location>
</feature>
<evidence type="ECO:0000250" key="1"/>
<evidence type="ECO:0000255" key="2">
    <source>
        <dbReference type="PROSITE-ProRule" id="PRU00159"/>
    </source>
</evidence>
<evidence type="ECO:0000255" key="3">
    <source>
        <dbReference type="PROSITE-ProRule" id="PRU10027"/>
    </source>
</evidence>
<evidence type="ECO:0000305" key="4"/>
<accession>Q92241</accession>
<accession>Q6CR43</accession>
<name>PHO85_KLULA</name>
<protein>
    <recommendedName>
        <fullName>Negative regulator of the PHO system</fullName>
        <ecNumber>2.7.11.22</ecNumber>
    </recommendedName>
    <alternativeName>
        <fullName>Serine/threonine-protein kinase PHO85</fullName>
    </alternativeName>
</protein>
<gene>
    <name type="primary">PHO85</name>
    <name type="ordered locus">KLLA0D11990g</name>
</gene>
<organism>
    <name type="scientific">Kluyveromyces lactis (strain ATCC 8585 / CBS 2359 / DSM 70799 / NBRC 1267 / NRRL Y-1140 / WM37)</name>
    <name type="common">Yeast</name>
    <name type="synonym">Candida sphaerica</name>
    <dbReference type="NCBI Taxonomy" id="284590"/>
    <lineage>
        <taxon>Eukaryota</taxon>
        <taxon>Fungi</taxon>
        <taxon>Dikarya</taxon>
        <taxon>Ascomycota</taxon>
        <taxon>Saccharomycotina</taxon>
        <taxon>Saccharomycetes</taxon>
        <taxon>Saccharomycetales</taxon>
        <taxon>Saccharomycetaceae</taxon>
        <taxon>Kluyveromyces</taxon>
    </lineage>
</organism>
<comment type="function">
    <text evidence="1">When phosphate concentrations are high it phosphorylates the PHO4 transcription factor thus establishing repression.</text>
</comment>
<comment type="catalytic activity">
    <reaction>
        <text>L-seryl-[protein] + ATP = O-phospho-L-seryl-[protein] + ADP + H(+)</text>
        <dbReference type="Rhea" id="RHEA:17989"/>
        <dbReference type="Rhea" id="RHEA-COMP:9863"/>
        <dbReference type="Rhea" id="RHEA-COMP:11604"/>
        <dbReference type="ChEBI" id="CHEBI:15378"/>
        <dbReference type="ChEBI" id="CHEBI:29999"/>
        <dbReference type="ChEBI" id="CHEBI:30616"/>
        <dbReference type="ChEBI" id="CHEBI:83421"/>
        <dbReference type="ChEBI" id="CHEBI:456216"/>
        <dbReference type="EC" id="2.7.11.22"/>
    </reaction>
</comment>
<comment type="catalytic activity">
    <reaction>
        <text>L-threonyl-[protein] + ATP = O-phospho-L-threonyl-[protein] + ADP + H(+)</text>
        <dbReference type="Rhea" id="RHEA:46608"/>
        <dbReference type="Rhea" id="RHEA-COMP:11060"/>
        <dbReference type="Rhea" id="RHEA-COMP:11605"/>
        <dbReference type="ChEBI" id="CHEBI:15378"/>
        <dbReference type="ChEBI" id="CHEBI:30013"/>
        <dbReference type="ChEBI" id="CHEBI:30616"/>
        <dbReference type="ChEBI" id="CHEBI:61977"/>
        <dbReference type="ChEBI" id="CHEBI:456216"/>
        <dbReference type="EC" id="2.7.11.22"/>
    </reaction>
</comment>
<comment type="subunit">
    <text evidence="1">Interacts with a number of cyclins.</text>
</comment>
<comment type="similarity">
    <text evidence="4">Belongs to the protein kinase superfamily. CMGC Ser/Thr protein kinase family. CDC2/CDKX subfamily.</text>
</comment>
<reference key="1">
    <citation type="submission" date="1996-09" db="EMBL/GenBank/DDBJ databases">
        <title>The PHO85 gene of K.lactis.</title>
        <authorList>
            <person name="Uccelletti D."/>
            <person name="Morlupi A."/>
            <person name="Palleschi C."/>
        </authorList>
    </citation>
    <scope>NUCLEOTIDE SEQUENCE [GENOMIC DNA]</scope>
    <source>
        <strain>ATCC 76492 / CBS 2359/152 / CLIB 210</strain>
    </source>
</reference>
<reference key="2">
    <citation type="journal article" date="2004" name="Nature">
        <title>Genome evolution in yeasts.</title>
        <authorList>
            <person name="Dujon B."/>
            <person name="Sherman D."/>
            <person name="Fischer G."/>
            <person name="Durrens P."/>
            <person name="Casaregola S."/>
            <person name="Lafontaine I."/>
            <person name="de Montigny J."/>
            <person name="Marck C."/>
            <person name="Neuveglise C."/>
            <person name="Talla E."/>
            <person name="Goffard N."/>
            <person name="Frangeul L."/>
            <person name="Aigle M."/>
            <person name="Anthouard V."/>
            <person name="Babour A."/>
            <person name="Barbe V."/>
            <person name="Barnay S."/>
            <person name="Blanchin S."/>
            <person name="Beckerich J.-M."/>
            <person name="Beyne E."/>
            <person name="Bleykasten C."/>
            <person name="Boisrame A."/>
            <person name="Boyer J."/>
            <person name="Cattolico L."/>
            <person name="Confanioleri F."/>
            <person name="de Daruvar A."/>
            <person name="Despons L."/>
            <person name="Fabre E."/>
            <person name="Fairhead C."/>
            <person name="Ferry-Dumazet H."/>
            <person name="Groppi A."/>
            <person name="Hantraye F."/>
            <person name="Hennequin C."/>
            <person name="Jauniaux N."/>
            <person name="Joyet P."/>
            <person name="Kachouri R."/>
            <person name="Kerrest A."/>
            <person name="Koszul R."/>
            <person name="Lemaire M."/>
            <person name="Lesur I."/>
            <person name="Ma L."/>
            <person name="Muller H."/>
            <person name="Nicaud J.-M."/>
            <person name="Nikolski M."/>
            <person name="Oztas S."/>
            <person name="Ozier-Kalogeropoulos O."/>
            <person name="Pellenz S."/>
            <person name="Potier S."/>
            <person name="Richard G.-F."/>
            <person name="Straub M.-L."/>
            <person name="Suleau A."/>
            <person name="Swennen D."/>
            <person name="Tekaia F."/>
            <person name="Wesolowski-Louvel M."/>
            <person name="Westhof E."/>
            <person name="Wirth B."/>
            <person name="Zeniou-Meyer M."/>
            <person name="Zivanovic Y."/>
            <person name="Bolotin-Fukuhara M."/>
            <person name="Thierry A."/>
            <person name="Bouchier C."/>
            <person name="Caudron B."/>
            <person name="Scarpelli C."/>
            <person name="Gaillardin C."/>
            <person name="Weissenbach J."/>
            <person name="Wincker P."/>
            <person name="Souciet J.-L."/>
        </authorList>
    </citation>
    <scope>NUCLEOTIDE SEQUENCE [LARGE SCALE GENOMIC DNA]</scope>
    <source>
        <strain>ATCC 8585 / CBS 2359 / DSM 70799 / NBRC 1267 / NRRL Y-1140 / WM37</strain>
    </source>
</reference>
<dbReference type="EC" id="2.7.11.22"/>
<dbReference type="EMBL" id="X95418">
    <property type="protein sequence ID" value="CAA64698.1"/>
    <property type="molecule type" value="Genomic_DNA"/>
</dbReference>
<dbReference type="EMBL" id="CR382124">
    <property type="protein sequence ID" value="CAH00692.1"/>
    <property type="molecule type" value="Genomic_DNA"/>
</dbReference>
<dbReference type="RefSeq" id="XP_453596.1">
    <property type="nucleotide sequence ID" value="XM_453596.1"/>
</dbReference>
<dbReference type="SMR" id="Q92241"/>
<dbReference type="FunCoup" id="Q92241">
    <property type="interactions" value="558"/>
</dbReference>
<dbReference type="STRING" id="284590.Q92241"/>
<dbReference type="PaxDb" id="284590-Q92241"/>
<dbReference type="KEGG" id="kla:KLLA0_D11990g"/>
<dbReference type="eggNOG" id="KOG0594">
    <property type="taxonomic scope" value="Eukaryota"/>
</dbReference>
<dbReference type="HOGENOM" id="CLU_000288_181_1_1"/>
<dbReference type="InParanoid" id="Q92241"/>
<dbReference type="OMA" id="NWQIFVP"/>
<dbReference type="Proteomes" id="UP000000598">
    <property type="component" value="Chromosome D"/>
</dbReference>
<dbReference type="GO" id="GO:0005737">
    <property type="term" value="C:cytoplasm"/>
    <property type="evidence" value="ECO:0007669"/>
    <property type="project" value="TreeGrafter"/>
</dbReference>
<dbReference type="GO" id="GO:0005634">
    <property type="term" value="C:nucleus"/>
    <property type="evidence" value="ECO:0007669"/>
    <property type="project" value="TreeGrafter"/>
</dbReference>
<dbReference type="GO" id="GO:1902554">
    <property type="term" value="C:serine/threonine protein kinase complex"/>
    <property type="evidence" value="ECO:0007669"/>
    <property type="project" value="UniProtKB-ARBA"/>
</dbReference>
<dbReference type="GO" id="GO:0005524">
    <property type="term" value="F:ATP binding"/>
    <property type="evidence" value="ECO:0007669"/>
    <property type="project" value="UniProtKB-KW"/>
</dbReference>
<dbReference type="GO" id="GO:0004693">
    <property type="term" value="F:cyclin-dependent protein serine/threonine kinase activity"/>
    <property type="evidence" value="ECO:0007669"/>
    <property type="project" value="UniProtKB-EC"/>
</dbReference>
<dbReference type="GO" id="GO:0106310">
    <property type="term" value="F:protein serine kinase activity"/>
    <property type="evidence" value="ECO:0007669"/>
    <property type="project" value="RHEA"/>
</dbReference>
<dbReference type="GO" id="GO:0009891">
    <property type="term" value="P:positive regulation of biosynthetic process"/>
    <property type="evidence" value="ECO:0007669"/>
    <property type="project" value="UniProtKB-ARBA"/>
</dbReference>
<dbReference type="GO" id="GO:0006355">
    <property type="term" value="P:regulation of DNA-templated transcription"/>
    <property type="evidence" value="ECO:0007669"/>
    <property type="project" value="UniProtKB-ARBA"/>
</dbReference>
<dbReference type="FunFam" id="1.10.510.10:FF:000524">
    <property type="entry name" value="Cell division protein kinase 2"/>
    <property type="match status" value="1"/>
</dbReference>
<dbReference type="FunFam" id="3.30.200.20:FF:000062">
    <property type="entry name" value="PHO system negative regulator"/>
    <property type="match status" value="1"/>
</dbReference>
<dbReference type="Gene3D" id="3.30.200.20">
    <property type="entry name" value="Phosphorylase Kinase, domain 1"/>
    <property type="match status" value="1"/>
</dbReference>
<dbReference type="Gene3D" id="1.10.510.10">
    <property type="entry name" value="Transferase(Phosphotransferase) domain 1"/>
    <property type="match status" value="1"/>
</dbReference>
<dbReference type="InterPro" id="IPR050108">
    <property type="entry name" value="CDK"/>
</dbReference>
<dbReference type="InterPro" id="IPR011009">
    <property type="entry name" value="Kinase-like_dom_sf"/>
</dbReference>
<dbReference type="InterPro" id="IPR000719">
    <property type="entry name" value="Prot_kinase_dom"/>
</dbReference>
<dbReference type="InterPro" id="IPR017441">
    <property type="entry name" value="Protein_kinase_ATP_BS"/>
</dbReference>
<dbReference type="InterPro" id="IPR008271">
    <property type="entry name" value="Ser/Thr_kinase_AS"/>
</dbReference>
<dbReference type="PANTHER" id="PTHR24056">
    <property type="entry name" value="CELL DIVISION PROTEIN KINASE"/>
    <property type="match status" value="1"/>
</dbReference>
<dbReference type="PANTHER" id="PTHR24056:SF46">
    <property type="entry name" value="CYCLIN-DEPENDENT KINASE 5"/>
    <property type="match status" value="1"/>
</dbReference>
<dbReference type="Pfam" id="PF00069">
    <property type="entry name" value="Pkinase"/>
    <property type="match status" value="1"/>
</dbReference>
<dbReference type="SMART" id="SM00220">
    <property type="entry name" value="S_TKc"/>
    <property type="match status" value="1"/>
</dbReference>
<dbReference type="SUPFAM" id="SSF56112">
    <property type="entry name" value="Protein kinase-like (PK-like)"/>
    <property type="match status" value="1"/>
</dbReference>
<dbReference type="PROSITE" id="PS00107">
    <property type="entry name" value="PROTEIN_KINASE_ATP"/>
    <property type="match status" value="1"/>
</dbReference>
<dbReference type="PROSITE" id="PS50011">
    <property type="entry name" value="PROTEIN_KINASE_DOM"/>
    <property type="match status" value="1"/>
</dbReference>
<dbReference type="PROSITE" id="PS00108">
    <property type="entry name" value="PROTEIN_KINASE_ST"/>
    <property type="match status" value="1"/>
</dbReference>
<proteinExistence type="inferred from homology"/>